<feature type="chain" id="PRO_0000197203" description="Metallothionein-2">
    <location>
        <begin position="1"/>
        <end position="61"/>
    </location>
</feature>
<feature type="region of interest" description="Beta">
    <location>
        <begin position="1"/>
        <end position="29"/>
    </location>
</feature>
<feature type="region of interest" description="Alpha">
    <location>
        <begin position="30"/>
        <end position="61"/>
    </location>
</feature>
<feature type="binding site" evidence="1">
    <location>
        <position position="5"/>
    </location>
    <ligand>
        <name>a divalent metal cation</name>
        <dbReference type="ChEBI" id="CHEBI:60240"/>
        <label>1</label>
        <note>in cluster B</note>
    </ligand>
</feature>
<feature type="binding site" evidence="1">
    <location>
        <position position="7"/>
    </location>
    <ligand>
        <name>a divalent metal cation</name>
        <dbReference type="ChEBI" id="CHEBI:60240"/>
        <label>1</label>
        <note>in cluster B</note>
    </ligand>
</feature>
<feature type="binding site" evidence="1">
    <location>
        <position position="7"/>
    </location>
    <ligand>
        <name>a divalent metal cation</name>
        <dbReference type="ChEBI" id="CHEBI:60240"/>
        <label>2</label>
        <note>in cluster B</note>
    </ligand>
</feature>
<feature type="binding site" evidence="1">
    <location>
        <position position="13"/>
    </location>
    <ligand>
        <name>a divalent metal cation</name>
        <dbReference type="ChEBI" id="CHEBI:60240"/>
        <label>2</label>
        <note>in cluster B</note>
    </ligand>
</feature>
<feature type="binding site" evidence="1">
    <location>
        <position position="15"/>
    </location>
    <ligand>
        <name>a divalent metal cation</name>
        <dbReference type="ChEBI" id="CHEBI:60240"/>
        <label>2</label>
        <note>in cluster B</note>
    </ligand>
</feature>
<feature type="binding site" evidence="1">
    <location>
        <position position="15"/>
    </location>
    <ligand>
        <name>a divalent metal cation</name>
        <dbReference type="ChEBI" id="CHEBI:60240"/>
        <label>3</label>
        <note>in cluster B</note>
    </ligand>
</feature>
<feature type="binding site" evidence="1">
    <location>
        <position position="19"/>
    </location>
    <ligand>
        <name>a divalent metal cation</name>
        <dbReference type="ChEBI" id="CHEBI:60240"/>
        <label>3</label>
        <note>in cluster B</note>
    </ligand>
</feature>
<feature type="binding site" evidence="1">
    <location>
        <position position="21"/>
    </location>
    <ligand>
        <name>a divalent metal cation</name>
        <dbReference type="ChEBI" id="CHEBI:60240"/>
        <label>1</label>
        <note>in cluster B</note>
    </ligand>
</feature>
<feature type="binding site" evidence="1">
    <location>
        <position position="24"/>
    </location>
    <ligand>
        <name>a divalent metal cation</name>
        <dbReference type="ChEBI" id="CHEBI:60240"/>
        <label>1</label>
        <note>in cluster B</note>
    </ligand>
</feature>
<feature type="binding site" evidence="1">
    <location>
        <position position="24"/>
    </location>
    <ligand>
        <name>a divalent metal cation</name>
        <dbReference type="ChEBI" id="CHEBI:60240"/>
        <label>3</label>
        <note>in cluster B</note>
    </ligand>
</feature>
<feature type="binding site" evidence="1">
    <location>
        <position position="26"/>
    </location>
    <ligand>
        <name>a divalent metal cation</name>
        <dbReference type="ChEBI" id="CHEBI:60240"/>
        <label>2</label>
        <note>in cluster B</note>
    </ligand>
</feature>
<feature type="binding site" evidence="1">
    <location>
        <position position="29"/>
    </location>
    <ligand>
        <name>a divalent metal cation</name>
        <dbReference type="ChEBI" id="CHEBI:60240"/>
        <label>3</label>
        <note>in cluster B</note>
    </ligand>
</feature>
<feature type="binding site" evidence="1">
    <location>
        <position position="33"/>
    </location>
    <ligand>
        <name>a divalent metal cation</name>
        <dbReference type="ChEBI" id="CHEBI:60240"/>
        <label>4</label>
        <note>in cluster A</note>
    </ligand>
</feature>
<feature type="binding site" evidence="1">
    <location>
        <position position="34"/>
    </location>
    <ligand>
        <name>a divalent metal cation</name>
        <dbReference type="ChEBI" id="CHEBI:60240"/>
        <label>4</label>
        <note>in cluster A</note>
    </ligand>
</feature>
<feature type="binding site" evidence="1">
    <location>
        <position position="34"/>
    </location>
    <ligand>
        <name>a divalent metal cation</name>
        <dbReference type="ChEBI" id="CHEBI:60240"/>
        <label>5</label>
        <note>in cluster A</note>
    </ligand>
</feature>
<feature type="binding site" evidence="1">
    <location>
        <position position="36"/>
    </location>
    <ligand>
        <name>a divalent metal cation</name>
        <dbReference type="ChEBI" id="CHEBI:60240"/>
        <label>5</label>
        <note>in cluster A</note>
    </ligand>
</feature>
<feature type="binding site" evidence="1">
    <location>
        <position position="37"/>
    </location>
    <ligand>
        <name>a divalent metal cation</name>
        <dbReference type="ChEBI" id="CHEBI:60240"/>
        <label>5</label>
        <note>in cluster A</note>
    </ligand>
</feature>
<feature type="binding site" evidence="1">
    <location>
        <position position="37"/>
    </location>
    <ligand>
        <name>a divalent metal cation</name>
        <dbReference type="ChEBI" id="CHEBI:60240"/>
        <label>6</label>
        <note>in cluster A</note>
    </ligand>
</feature>
<feature type="binding site" evidence="1">
    <location>
        <position position="41"/>
    </location>
    <ligand>
        <name>a divalent metal cation</name>
        <dbReference type="ChEBI" id="CHEBI:60240"/>
        <label>6</label>
        <note>in cluster A</note>
    </ligand>
</feature>
<feature type="binding site" evidence="1">
    <location>
        <position position="44"/>
    </location>
    <ligand>
        <name>a divalent metal cation</name>
        <dbReference type="ChEBI" id="CHEBI:60240"/>
        <label>4</label>
        <note>in cluster A</note>
    </ligand>
</feature>
<feature type="binding site" evidence="1">
    <location>
        <position position="44"/>
    </location>
    <ligand>
        <name>a divalent metal cation</name>
        <dbReference type="ChEBI" id="CHEBI:60240"/>
        <label>6</label>
        <note>in cluster A</note>
    </ligand>
</feature>
<feature type="binding site" evidence="1">
    <location>
        <position position="48"/>
    </location>
    <ligand>
        <name>a divalent metal cation</name>
        <dbReference type="ChEBI" id="CHEBI:60240"/>
        <label>4</label>
        <note>in cluster A</note>
    </ligand>
</feature>
<feature type="binding site" evidence="1">
    <location>
        <position position="50"/>
    </location>
    <ligand>
        <name>a divalent metal cation</name>
        <dbReference type="ChEBI" id="CHEBI:60240"/>
        <label>5</label>
        <note>in cluster A</note>
    </ligand>
</feature>
<feature type="binding site" evidence="1">
    <location>
        <position position="50"/>
    </location>
    <ligand>
        <name>a divalent metal cation</name>
        <dbReference type="ChEBI" id="CHEBI:60240"/>
        <label>7</label>
        <note>in cluster A</note>
    </ligand>
</feature>
<feature type="binding site" evidence="1">
    <location>
        <position position="57"/>
    </location>
    <ligand>
        <name>a divalent metal cation</name>
        <dbReference type="ChEBI" id="CHEBI:60240"/>
        <label>7</label>
        <note>in cluster A</note>
    </ligand>
</feature>
<feature type="binding site" evidence="1">
    <location>
        <position position="59"/>
    </location>
    <ligand>
        <name>a divalent metal cation</name>
        <dbReference type="ChEBI" id="CHEBI:60240"/>
        <label>7</label>
        <note>in cluster A</note>
    </ligand>
</feature>
<feature type="binding site" evidence="1">
    <location>
        <position position="60"/>
    </location>
    <ligand>
        <name>a divalent metal cation</name>
        <dbReference type="ChEBI" id="CHEBI:60240"/>
        <label>6</label>
        <note>in cluster A</note>
    </ligand>
</feature>
<feature type="binding site" evidence="1">
    <location>
        <position position="60"/>
    </location>
    <ligand>
        <name>a divalent metal cation</name>
        <dbReference type="ChEBI" id="CHEBI:60240"/>
        <label>7</label>
        <note>in cluster A</note>
    </ligand>
</feature>
<feature type="modified residue" description="N-acetylmethionine" evidence="2">
    <location>
        <position position="1"/>
    </location>
</feature>
<feature type="modified residue" description="Phosphoserine" evidence="1">
    <location>
        <position position="58"/>
    </location>
</feature>
<proteinExistence type="inferred from homology"/>
<protein>
    <recommendedName>
        <fullName>Metallothionein-2</fullName>
        <shortName>MT-2</shortName>
    </recommendedName>
    <alternativeName>
        <fullName>Metallothionein-II</fullName>
        <shortName>MT-II</shortName>
    </alternativeName>
</protein>
<dbReference type="EMBL" id="J03848">
    <property type="protein sequence ID" value="AAA37101.1"/>
    <property type="molecule type" value="mRNA"/>
</dbReference>
<dbReference type="PIR" id="I48173">
    <property type="entry name" value="I48173"/>
</dbReference>
<dbReference type="RefSeq" id="NP_001268811.1">
    <property type="nucleotide sequence ID" value="NM_001281882.1"/>
</dbReference>
<dbReference type="SMR" id="P17808"/>
<dbReference type="Ensembl" id="ENSMAUT00000017032">
    <property type="protein sequence ID" value="ENSMAUP00000013123"/>
    <property type="gene ID" value="ENSMAUG00000013234"/>
</dbReference>
<dbReference type="GeneID" id="101829009"/>
<dbReference type="KEGG" id="maua:101829009"/>
<dbReference type="CTD" id="4502"/>
<dbReference type="eggNOG" id="KOG4738">
    <property type="taxonomic scope" value="Eukaryota"/>
</dbReference>
<dbReference type="Proteomes" id="UP000189706">
    <property type="component" value="Unplaced"/>
</dbReference>
<dbReference type="GO" id="GO:0005737">
    <property type="term" value="C:cytoplasm"/>
    <property type="evidence" value="ECO:0000250"/>
    <property type="project" value="UniProtKB"/>
</dbReference>
<dbReference type="GO" id="GO:0005634">
    <property type="term" value="C:nucleus"/>
    <property type="evidence" value="ECO:0000250"/>
    <property type="project" value="UniProtKB"/>
</dbReference>
<dbReference type="GO" id="GO:0008270">
    <property type="term" value="F:zinc ion binding"/>
    <property type="evidence" value="ECO:0000250"/>
    <property type="project" value="UniProtKB"/>
</dbReference>
<dbReference type="GO" id="GO:0071276">
    <property type="term" value="P:cellular response to cadmium ion"/>
    <property type="evidence" value="ECO:0007669"/>
    <property type="project" value="TreeGrafter"/>
</dbReference>
<dbReference type="GO" id="GO:0071280">
    <property type="term" value="P:cellular response to copper ion"/>
    <property type="evidence" value="ECO:0007669"/>
    <property type="project" value="TreeGrafter"/>
</dbReference>
<dbReference type="GO" id="GO:0071294">
    <property type="term" value="P:cellular response to zinc ion"/>
    <property type="evidence" value="ECO:0000250"/>
    <property type="project" value="UniProtKB"/>
</dbReference>
<dbReference type="GO" id="GO:0010273">
    <property type="term" value="P:detoxification of copper ion"/>
    <property type="evidence" value="ECO:0007669"/>
    <property type="project" value="TreeGrafter"/>
</dbReference>
<dbReference type="GO" id="GO:0006882">
    <property type="term" value="P:intracellular zinc ion homeostasis"/>
    <property type="evidence" value="ECO:0007669"/>
    <property type="project" value="TreeGrafter"/>
</dbReference>
<dbReference type="GO" id="GO:0045926">
    <property type="term" value="P:negative regulation of growth"/>
    <property type="evidence" value="ECO:0000250"/>
    <property type="project" value="UniProtKB"/>
</dbReference>
<dbReference type="FunFam" id="4.10.10.10:FF:000001">
    <property type="entry name" value="Metallothionein"/>
    <property type="match status" value="1"/>
</dbReference>
<dbReference type="Gene3D" id="4.10.10.10">
    <property type="entry name" value="Metallothionein Isoform II"/>
    <property type="match status" value="1"/>
</dbReference>
<dbReference type="InterPro" id="IPR017854">
    <property type="entry name" value="Metalthion_dom_sf"/>
</dbReference>
<dbReference type="InterPro" id="IPR023587">
    <property type="entry name" value="Metalthion_dom_sf_vert"/>
</dbReference>
<dbReference type="InterPro" id="IPR000006">
    <property type="entry name" value="Metalthion_vert"/>
</dbReference>
<dbReference type="InterPro" id="IPR018064">
    <property type="entry name" value="Metalthion_vert_metal_BS"/>
</dbReference>
<dbReference type="PANTHER" id="PTHR23299">
    <property type="entry name" value="METALLOTHIONEIN"/>
    <property type="match status" value="1"/>
</dbReference>
<dbReference type="PANTHER" id="PTHR23299:SF22">
    <property type="entry name" value="METALLOTHIONEIN-1G"/>
    <property type="match status" value="1"/>
</dbReference>
<dbReference type="Pfam" id="PF00131">
    <property type="entry name" value="Metallothio"/>
    <property type="match status" value="1"/>
</dbReference>
<dbReference type="PRINTS" id="PR00860">
    <property type="entry name" value="MTVERTEBRATE"/>
</dbReference>
<dbReference type="SUPFAM" id="SSF57868">
    <property type="entry name" value="Metallothionein"/>
    <property type="match status" value="1"/>
</dbReference>
<dbReference type="PROSITE" id="PS00203">
    <property type="entry name" value="METALLOTHIONEIN_VRT"/>
    <property type="match status" value="1"/>
</dbReference>
<name>MT2_MESAU</name>
<reference key="1">
    <citation type="journal article" date="1988" name="Proc. Natl. Acad. Sci. U.S.A.">
        <title>Isolation of cDNAs of scrapie-modulated RNAs by subtractive hybridization of a cDNA library.</title>
        <authorList>
            <person name="Duguid J.R."/>
            <person name="Rohwer R.G."/>
            <person name="Seed B."/>
        </authorList>
    </citation>
    <scope>NUCLEOTIDE SEQUENCE [MRNA]</scope>
</reference>
<gene>
    <name type="primary">MT2</name>
</gene>
<organism>
    <name type="scientific">Mesocricetus auratus</name>
    <name type="common">Golden hamster</name>
    <dbReference type="NCBI Taxonomy" id="10036"/>
    <lineage>
        <taxon>Eukaryota</taxon>
        <taxon>Metazoa</taxon>
        <taxon>Chordata</taxon>
        <taxon>Craniata</taxon>
        <taxon>Vertebrata</taxon>
        <taxon>Euteleostomi</taxon>
        <taxon>Mammalia</taxon>
        <taxon>Eutheria</taxon>
        <taxon>Euarchontoglires</taxon>
        <taxon>Glires</taxon>
        <taxon>Rodentia</taxon>
        <taxon>Myomorpha</taxon>
        <taxon>Muroidea</taxon>
        <taxon>Cricetidae</taxon>
        <taxon>Cricetinae</taxon>
        <taxon>Mesocricetus</taxon>
    </lineage>
</organism>
<comment type="function">
    <text>Metallothioneins have a high content of cysteine residues that bind various heavy metals; these proteins are transcriptionally regulated by both heavy metals and glucocorticoids.</text>
</comment>
<comment type="domain">
    <text>Class I metallothioneins contain 2 metal-binding domains: four divalent ions are chelated within cluster A of the alpha domain and are coordinated via cysteinyl thiolate bridges to 11 cysteine ligands. Cluster B, the corresponding region within the beta domain, can ligate three divalent ions to 9 cysteines.</text>
</comment>
<comment type="similarity">
    <text evidence="3">Belongs to the metallothionein superfamily. Type 1 family.</text>
</comment>
<evidence type="ECO:0000250" key="1">
    <source>
        <dbReference type="UniProtKB" id="P02795"/>
    </source>
</evidence>
<evidence type="ECO:0000250" key="2">
    <source>
        <dbReference type="UniProtKB" id="P68301"/>
    </source>
</evidence>
<evidence type="ECO:0000305" key="3"/>
<keyword id="KW-0007">Acetylation</keyword>
<keyword id="KW-0479">Metal-binding</keyword>
<keyword id="KW-0480">Metal-thiolate cluster</keyword>
<keyword id="KW-0597">Phosphoprotein</keyword>
<keyword id="KW-1185">Reference proteome</keyword>
<accession>P17808</accession>
<sequence>MDPNCSCATDGSCSCSGSCKCKECKCTTCKKSCCSCCPVGCAKCSQGCVCKEASEKCSCCA</sequence>